<keyword id="KW-0963">Cytoplasm</keyword>
<keyword id="KW-0931">ER-Golgi transport</keyword>
<keyword id="KW-0539">Nucleus</keyword>
<keyword id="KW-1185">Reference proteome</keyword>
<keyword id="KW-0804">Transcription</keyword>
<keyword id="KW-0813">Transport</keyword>
<proteinExistence type="inferred from homology"/>
<sequence>MSGSFYFVIVGHHDNPVFEMEFLPAGKAESKDDHRHLNQFIAHAALDLVDENMWLSNNMYLKTVDKFNEWFVSAFVTAGHMRFIMLHDIRQEDGIKNFFTDVYDLYIKFAMNPFYEPNSPIRSSAFDRKVQFLGKKHLLS</sequence>
<comment type="function">
    <text evidence="1">Prevents ENO1-mediated transcriptional repression and antagonizes ENO1-mediated cell death. May play a role in vesicular transport from endoplasmic reticulum to Golgi (By similarity).</text>
</comment>
<comment type="subunit">
    <text evidence="1">Part of the multisubunit TRAPP (transport protein particle) complex. Interacts with ENO1, PITX1, SF1, TRAPPC2L and TRAPPC3.</text>
</comment>
<comment type="subcellular location">
    <subcellularLocation>
        <location evidence="2">Cytoplasm</location>
        <location evidence="2">Perinuclear region</location>
    </subcellularLocation>
    <subcellularLocation>
        <location evidence="2">Nucleus</location>
    </subcellularLocation>
    <subcellularLocation>
        <location evidence="2">Endoplasmic reticulum-Golgi intermediate compartment</location>
    </subcellularLocation>
    <subcellularLocation>
        <location evidence="2">Cytoplasm</location>
    </subcellularLocation>
    <text evidence="2">Localized in perinuclear granular structures.</text>
</comment>
<comment type="similarity">
    <text evidence="3">Belongs to the TRAPP small subunits family. Sedlin subfamily.</text>
</comment>
<name>TPPC2_CANLF</name>
<gene>
    <name type="primary">TRAPPC2</name>
</gene>
<protein>
    <recommendedName>
        <fullName>Trafficking protein particle complex subunit 2</fullName>
    </recommendedName>
</protein>
<dbReference type="SMR" id="E2QV03"/>
<dbReference type="FunCoup" id="E2QV03">
    <property type="interactions" value="967"/>
</dbReference>
<dbReference type="STRING" id="9615.ENSCAFP00000017291"/>
<dbReference type="PaxDb" id="9612-ENSCAFP00000017291"/>
<dbReference type="Ensembl" id="ENSCAFT00000018666.5">
    <property type="protein sequence ID" value="ENSCAFP00000017291.4"/>
    <property type="gene ID" value="ENSCAFG00000011754.5"/>
</dbReference>
<dbReference type="Ensembl" id="ENSCAFT00040020289.1">
    <property type="protein sequence ID" value="ENSCAFP00040017600.1"/>
    <property type="gene ID" value="ENSCAFG00040010992.1"/>
</dbReference>
<dbReference type="eggNOG" id="KOG3487">
    <property type="taxonomic scope" value="Eukaryota"/>
</dbReference>
<dbReference type="InParanoid" id="E2QV03"/>
<dbReference type="Reactome" id="R-CFA-204005">
    <property type="pathway name" value="COPII-mediated vesicle transport"/>
</dbReference>
<dbReference type="Reactome" id="R-CFA-8876198">
    <property type="pathway name" value="RAB GEFs exchange GTP for GDP on RABs"/>
</dbReference>
<dbReference type="Proteomes" id="UP000002254">
    <property type="component" value="Chromosome X"/>
</dbReference>
<dbReference type="Proteomes" id="UP000694429">
    <property type="component" value="Unplaced"/>
</dbReference>
<dbReference type="Proteomes" id="UP000694542">
    <property type="component" value="Chromosome X"/>
</dbReference>
<dbReference type="Proteomes" id="UP000805418">
    <property type="component" value="Unplaced"/>
</dbReference>
<dbReference type="GO" id="GO:0005793">
    <property type="term" value="C:endoplasmic reticulum-Golgi intermediate compartment"/>
    <property type="evidence" value="ECO:0007669"/>
    <property type="project" value="UniProtKB-SubCell"/>
</dbReference>
<dbReference type="GO" id="GO:0005634">
    <property type="term" value="C:nucleus"/>
    <property type="evidence" value="ECO:0000250"/>
    <property type="project" value="UniProtKB"/>
</dbReference>
<dbReference type="GO" id="GO:0048471">
    <property type="term" value="C:perinuclear region of cytoplasm"/>
    <property type="evidence" value="ECO:0007669"/>
    <property type="project" value="UniProtKB-SubCell"/>
</dbReference>
<dbReference type="GO" id="GO:0006888">
    <property type="term" value="P:endoplasmic reticulum to Golgi vesicle-mediated transport"/>
    <property type="evidence" value="ECO:0007669"/>
    <property type="project" value="InterPro"/>
</dbReference>
<dbReference type="CDD" id="cd14825">
    <property type="entry name" value="TRAPPC2_sedlin"/>
    <property type="match status" value="1"/>
</dbReference>
<dbReference type="FunFam" id="3.30.450.70:FF:000001">
    <property type="entry name" value="Trafficking protein particle complex subunit 2"/>
    <property type="match status" value="1"/>
</dbReference>
<dbReference type="Gene3D" id="3.30.450.70">
    <property type="match status" value="1"/>
</dbReference>
<dbReference type="InterPro" id="IPR011012">
    <property type="entry name" value="Longin-like_dom_sf"/>
</dbReference>
<dbReference type="InterPro" id="IPR006722">
    <property type="entry name" value="Sedlin"/>
</dbReference>
<dbReference type="PANTHER" id="PTHR12403">
    <property type="entry name" value="TRAFFICKING PROTEIN PARTICLE COMPLEX SUBUNIT 2"/>
    <property type="match status" value="1"/>
</dbReference>
<dbReference type="Pfam" id="PF04628">
    <property type="entry name" value="Sedlin_N"/>
    <property type="match status" value="1"/>
</dbReference>
<dbReference type="SUPFAM" id="SSF64356">
    <property type="entry name" value="SNARE-like"/>
    <property type="match status" value="1"/>
</dbReference>
<accession>E2QV03</accession>
<evidence type="ECO:0000250" key="1"/>
<evidence type="ECO:0000250" key="2">
    <source>
        <dbReference type="UniProtKB" id="P0DI81"/>
    </source>
</evidence>
<evidence type="ECO:0000305" key="3"/>
<feature type="chain" id="PRO_0000412455" description="Trafficking protein particle complex subunit 2">
    <location>
        <begin position="1"/>
        <end position="140"/>
    </location>
</feature>
<organism>
    <name type="scientific">Canis lupus familiaris</name>
    <name type="common">Dog</name>
    <name type="synonym">Canis familiaris</name>
    <dbReference type="NCBI Taxonomy" id="9615"/>
    <lineage>
        <taxon>Eukaryota</taxon>
        <taxon>Metazoa</taxon>
        <taxon>Chordata</taxon>
        <taxon>Craniata</taxon>
        <taxon>Vertebrata</taxon>
        <taxon>Euteleostomi</taxon>
        <taxon>Mammalia</taxon>
        <taxon>Eutheria</taxon>
        <taxon>Laurasiatheria</taxon>
        <taxon>Carnivora</taxon>
        <taxon>Caniformia</taxon>
        <taxon>Canidae</taxon>
        <taxon>Canis</taxon>
    </lineage>
</organism>
<reference key="1">
    <citation type="journal article" date="2005" name="Nature">
        <title>Genome sequence, comparative analysis and haplotype structure of the domestic dog.</title>
        <authorList>
            <person name="Lindblad-Toh K."/>
            <person name="Wade C.M."/>
            <person name="Mikkelsen T.S."/>
            <person name="Karlsson E.K."/>
            <person name="Jaffe D.B."/>
            <person name="Kamal M."/>
            <person name="Clamp M."/>
            <person name="Chang J.L."/>
            <person name="Kulbokas E.J. III"/>
            <person name="Zody M.C."/>
            <person name="Mauceli E."/>
            <person name="Xie X."/>
            <person name="Breen M."/>
            <person name="Wayne R.K."/>
            <person name="Ostrander E.A."/>
            <person name="Ponting C.P."/>
            <person name="Galibert F."/>
            <person name="Smith D.R."/>
            <person name="deJong P.J."/>
            <person name="Kirkness E.F."/>
            <person name="Alvarez P."/>
            <person name="Biagi T."/>
            <person name="Brockman W."/>
            <person name="Butler J."/>
            <person name="Chin C.-W."/>
            <person name="Cook A."/>
            <person name="Cuff J."/>
            <person name="Daly M.J."/>
            <person name="DeCaprio D."/>
            <person name="Gnerre S."/>
            <person name="Grabherr M."/>
            <person name="Kellis M."/>
            <person name="Kleber M."/>
            <person name="Bardeleben C."/>
            <person name="Goodstadt L."/>
            <person name="Heger A."/>
            <person name="Hitte C."/>
            <person name="Kim L."/>
            <person name="Koepfli K.-P."/>
            <person name="Parker H.G."/>
            <person name="Pollinger J.P."/>
            <person name="Searle S.M.J."/>
            <person name="Sutter N.B."/>
            <person name="Thomas R."/>
            <person name="Webber C."/>
            <person name="Baldwin J."/>
            <person name="Abebe A."/>
            <person name="Abouelleil A."/>
            <person name="Aftuck L."/>
            <person name="Ait-Zahra M."/>
            <person name="Aldredge T."/>
            <person name="Allen N."/>
            <person name="An P."/>
            <person name="Anderson S."/>
            <person name="Antoine C."/>
            <person name="Arachchi H."/>
            <person name="Aslam A."/>
            <person name="Ayotte L."/>
            <person name="Bachantsang P."/>
            <person name="Barry A."/>
            <person name="Bayul T."/>
            <person name="Benamara M."/>
            <person name="Berlin A."/>
            <person name="Bessette D."/>
            <person name="Blitshteyn B."/>
            <person name="Bloom T."/>
            <person name="Blye J."/>
            <person name="Boguslavskiy L."/>
            <person name="Bonnet C."/>
            <person name="Boukhgalter B."/>
            <person name="Brown A."/>
            <person name="Cahill P."/>
            <person name="Calixte N."/>
            <person name="Camarata J."/>
            <person name="Cheshatsang Y."/>
            <person name="Chu J."/>
            <person name="Citroen M."/>
            <person name="Collymore A."/>
            <person name="Cooke P."/>
            <person name="Dawoe T."/>
            <person name="Daza R."/>
            <person name="Decktor K."/>
            <person name="DeGray S."/>
            <person name="Dhargay N."/>
            <person name="Dooley K."/>
            <person name="Dooley K."/>
            <person name="Dorje P."/>
            <person name="Dorjee K."/>
            <person name="Dorris L."/>
            <person name="Duffey N."/>
            <person name="Dupes A."/>
            <person name="Egbiremolen O."/>
            <person name="Elong R."/>
            <person name="Falk J."/>
            <person name="Farina A."/>
            <person name="Faro S."/>
            <person name="Ferguson D."/>
            <person name="Ferreira P."/>
            <person name="Fisher S."/>
            <person name="FitzGerald M."/>
            <person name="Foley K."/>
            <person name="Foley C."/>
            <person name="Franke A."/>
            <person name="Friedrich D."/>
            <person name="Gage D."/>
            <person name="Garber M."/>
            <person name="Gearin G."/>
            <person name="Giannoukos G."/>
            <person name="Goode T."/>
            <person name="Goyette A."/>
            <person name="Graham J."/>
            <person name="Grandbois E."/>
            <person name="Gyaltsen K."/>
            <person name="Hafez N."/>
            <person name="Hagopian D."/>
            <person name="Hagos B."/>
            <person name="Hall J."/>
            <person name="Healy C."/>
            <person name="Hegarty R."/>
            <person name="Honan T."/>
            <person name="Horn A."/>
            <person name="Houde N."/>
            <person name="Hughes L."/>
            <person name="Hunnicutt L."/>
            <person name="Husby M."/>
            <person name="Jester B."/>
            <person name="Jones C."/>
            <person name="Kamat A."/>
            <person name="Kanga B."/>
            <person name="Kells C."/>
            <person name="Khazanovich D."/>
            <person name="Kieu A.C."/>
            <person name="Kisner P."/>
            <person name="Kumar M."/>
            <person name="Lance K."/>
            <person name="Landers T."/>
            <person name="Lara M."/>
            <person name="Lee W."/>
            <person name="Leger J.-P."/>
            <person name="Lennon N."/>
            <person name="Leuper L."/>
            <person name="LeVine S."/>
            <person name="Liu J."/>
            <person name="Liu X."/>
            <person name="Lokyitsang Y."/>
            <person name="Lokyitsang T."/>
            <person name="Lui A."/>
            <person name="Macdonald J."/>
            <person name="Major J."/>
            <person name="Marabella R."/>
            <person name="Maru K."/>
            <person name="Matthews C."/>
            <person name="McDonough S."/>
            <person name="Mehta T."/>
            <person name="Meldrim J."/>
            <person name="Melnikov A."/>
            <person name="Meneus L."/>
            <person name="Mihalev A."/>
            <person name="Mihova T."/>
            <person name="Miller K."/>
            <person name="Mittelman R."/>
            <person name="Mlenga V."/>
            <person name="Mulrain L."/>
            <person name="Munson G."/>
            <person name="Navidi A."/>
            <person name="Naylor J."/>
            <person name="Nguyen T."/>
            <person name="Nguyen N."/>
            <person name="Nguyen C."/>
            <person name="Nguyen T."/>
            <person name="Nicol R."/>
            <person name="Norbu N."/>
            <person name="Norbu C."/>
            <person name="Novod N."/>
            <person name="Nyima T."/>
            <person name="Olandt P."/>
            <person name="O'Neill B."/>
            <person name="O'Neill K."/>
            <person name="Osman S."/>
            <person name="Oyono L."/>
            <person name="Patti C."/>
            <person name="Perrin D."/>
            <person name="Phunkhang P."/>
            <person name="Pierre F."/>
            <person name="Priest M."/>
            <person name="Rachupka A."/>
            <person name="Raghuraman S."/>
            <person name="Rameau R."/>
            <person name="Ray V."/>
            <person name="Raymond C."/>
            <person name="Rege F."/>
            <person name="Rise C."/>
            <person name="Rogers J."/>
            <person name="Rogov P."/>
            <person name="Sahalie J."/>
            <person name="Settipalli S."/>
            <person name="Sharpe T."/>
            <person name="Shea T."/>
            <person name="Sheehan M."/>
            <person name="Sherpa N."/>
            <person name="Shi J."/>
            <person name="Shih D."/>
            <person name="Sloan J."/>
            <person name="Smith C."/>
            <person name="Sparrow T."/>
            <person name="Stalker J."/>
            <person name="Stange-Thomann N."/>
            <person name="Stavropoulos S."/>
            <person name="Stone C."/>
            <person name="Stone S."/>
            <person name="Sykes S."/>
            <person name="Tchuinga P."/>
            <person name="Tenzing P."/>
            <person name="Tesfaye S."/>
            <person name="Thoulutsang D."/>
            <person name="Thoulutsang Y."/>
            <person name="Topham K."/>
            <person name="Topping I."/>
            <person name="Tsamla T."/>
            <person name="Vassiliev H."/>
            <person name="Venkataraman V."/>
            <person name="Vo A."/>
            <person name="Wangchuk T."/>
            <person name="Wangdi T."/>
            <person name="Weiand M."/>
            <person name="Wilkinson J."/>
            <person name="Wilson A."/>
            <person name="Yadav S."/>
            <person name="Yang S."/>
            <person name="Yang X."/>
            <person name="Young G."/>
            <person name="Yu Q."/>
            <person name="Zainoun J."/>
            <person name="Zembek L."/>
            <person name="Zimmer A."/>
            <person name="Lander E.S."/>
        </authorList>
    </citation>
    <scope>NUCLEOTIDE SEQUENCE [LARGE SCALE GENOMIC DNA]</scope>
    <source>
        <strain>Boxer</strain>
    </source>
</reference>